<comment type="function">
    <text evidence="2">Lysosomal membrane glycoprotein which plays a role in the unfolded protein response (UPR) that contributes to protein degradation and cell survival during proteasomal dysfunction. Plays a role in the process of fusion of the lysosome with the autophagosome, thereby modulating the autophagic process. Promotes hepatocellular lipogenesis through activation of the PI3K/Akt pathway. May also play a role in dendritic cell function and in adaptive immunity.</text>
</comment>
<comment type="subunit">
    <text evidence="1">Monomer. Interacts with FURIN.</text>
</comment>
<comment type="subcellular location">
    <subcellularLocation>
        <location evidence="2">Cell surface</location>
    </subcellularLocation>
    <subcellularLocation>
        <location evidence="2">Lysosome membrane</location>
        <topology evidence="3">Single-pass type I membrane protein</topology>
    </subcellularLocation>
    <subcellularLocation>
        <location evidence="2">Cytoplasmic vesicle membrane</location>
        <topology evidence="3">Single-pass type I membrane protein</topology>
    </subcellularLocation>
    <subcellularLocation>
        <location evidence="2">Early endosome membrane</location>
        <topology evidence="3">Single-pass type I membrane protein</topology>
    </subcellularLocation>
    <text evidence="2">During dendritic cell maturation, detected on cytoplasmic vesicles (the MHC II compartment) that contain MHC II proteins, LAMP1, LAMP2 and LAMP3. Detected on lysosomes in mature dendritic cells.</text>
</comment>
<comment type="similarity">
    <text evidence="4">Belongs to the LAMP family.</text>
</comment>
<protein>
    <recommendedName>
        <fullName>Lysosome-associated membrane glycoprotein 3</fullName>
        <shortName>LAMP-3</shortName>
        <shortName>Lysosomal-associated membrane protein 3</shortName>
    </recommendedName>
    <alternativeName>
        <fullName>DC-lysosome-associated membrane glycoprotein</fullName>
        <shortName>DC LAMP</shortName>
    </alternativeName>
    <cdAntigenName>CD208</cdAntigenName>
</protein>
<dbReference type="EMBL" id="AJ510130">
    <property type="protein sequence ID" value="CAD52824.1"/>
    <property type="molecule type" value="mRNA"/>
</dbReference>
<dbReference type="EMBL" id="AK028039">
    <property type="protein sequence ID" value="BAC25713.1"/>
    <property type="molecule type" value="mRNA"/>
</dbReference>
<dbReference type="CCDS" id="CCDS37285.1"/>
<dbReference type="RefSeq" id="NP_796330.2">
    <property type="nucleotide sequence ID" value="NM_177356.3"/>
</dbReference>
<dbReference type="SMR" id="Q7TST5"/>
<dbReference type="FunCoup" id="Q7TST5">
    <property type="interactions" value="352"/>
</dbReference>
<dbReference type="STRING" id="10090.ENSMUSP00000080556"/>
<dbReference type="GlyCosmos" id="Q7TST5">
    <property type="glycosylation" value="1 site, No reported glycans"/>
</dbReference>
<dbReference type="GlyGen" id="Q7TST5">
    <property type="glycosylation" value="1 site"/>
</dbReference>
<dbReference type="iPTMnet" id="Q7TST5"/>
<dbReference type="PhosphoSitePlus" id="Q7TST5"/>
<dbReference type="PaxDb" id="10090-ENSMUSP00000080556"/>
<dbReference type="PeptideAtlas" id="Q7TST5"/>
<dbReference type="ProteomicsDB" id="263700"/>
<dbReference type="DNASU" id="239739"/>
<dbReference type="Ensembl" id="ENSMUST00000081880.7">
    <property type="protein sequence ID" value="ENSMUSP00000080556.6"/>
    <property type="gene ID" value="ENSMUSG00000041247.9"/>
</dbReference>
<dbReference type="GeneID" id="239739"/>
<dbReference type="KEGG" id="mmu:239739"/>
<dbReference type="UCSC" id="uc007ypb.1">
    <property type="organism name" value="mouse"/>
</dbReference>
<dbReference type="AGR" id="MGI:2441659"/>
<dbReference type="CTD" id="27074"/>
<dbReference type="MGI" id="MGI:2441659">
    <property type="gene designation" value="Lamp3"/>
</dbReference>
<dbReference type="VEuPathDB" id="HostDB:ENSMUSG00000041247"/>
<dbReference type="eggNOG" id="KOG4818">
    <property type="taxonomic scope" value="Eukaryota"/>
</dbReference>
<dbReference type="GeneTree" id="ENSGT00950000182899"/>
<dbReference type="HOGENOM" id="CLU_057804_0_0_1"/>
<dbReference type="InParanoid" id="Q7TST5"/>
<dbReference type="OMA" id="QLLFVNM"/>
<dbReference type="OrthoDB" id="9428839at2759"/>
<dbReference type="PhylomeDB" id="Q7TST5"/>
<dbReference type="TreeFam" id="TF316339"/>
<dbReference type="BioGRID-ORCS" id="239739">
    <property type="hits" value="2 hits in 79 CRISPR screens"/>
</dbReference>
<dbReference type="ChiTaRS" id="Lamp3">
    <property type="organism name" value="mouse"/>
</dbReference>
<dbReference type="PRO" id="PR:Q7TST5"/>
<dbReference type="Proteomes" id="UP000000589">
    <property type="component" value="Chromosome 16"/>
</dbReference>
<dbReference type="RNAct" id="Q7TST5">
    <property type="molecule type" value="protein"/>
</dbReference>
<dbReference type="Bgee" id="ENSMUSG00000041247">
    <property type="expression patterns" value="Expressed in lung and 6 other cell types or tissues"/>
</dbReference>
<dbReference type="GO" id="GO:0097233">
    <property type="term" value="C:alveolar lamellar body membrane"/>
    <property type="evidence" value="ECO:0000314"/>
    <property type="project" value="MGI"/>
</dbReference>
<dbReference type="GO" id="GO:0009986">
    <property type="term" value="C:cell surface"/>
    <property type="evidence" value="ECO:0007669"/>
    <property type="project" value="UniProtKB-SubCell"/>
</dbReference>
<dbReference type="GO" id="GO:0031901">
    <property type="term" value="C:early endosome membrane"/>
    <property type="evidence" value="ECO:0007669"/>
    <property type="project" value="UniProtKB-SubCell"/>
</dbReference>
<dbReference type="GO" id="GO:0005765">
    <property type="term" value="C:lysosomal membrane"/>
    <property type="evidence" value="ECO:0000314"/>
    <property type="project" value="MGI"/>
</dbReference>
<dbReference type="GO" id="GO:0002250">
    <property type="term" value="P:adaptive immune response"/>
    <property type="evidence" value="ECO:0007669"/>
    <property type="project" value="UniProtKB-KW"/>
</dbReference>
<dbReference type="GO" id="GO:0006629">
    <property type="term" value="P:lipid metabolic process"/>
    <property type="evidence" value="ECO:0000315"/>
    <property type="project" value="MGI"/>
</dbReference>
<dbReference type="GO" id="GO:0043129">
    <property type="term" value="P:surfactant homeostasis"/>
    <property type="evidence" value="ECO:0000315"/>
    <property type="project" value="MGI"/>
</dbReference>
<dbReference type="FunFam" id="2.40.160.110:FF:000006">
    <property type="entry name" value="Lysosome-associated membrane glycoprotein 3"/>
    <property type="match status" value="1"/>
</dbReference>
<dbReference type="Gene3D" id="2.40.160.110">
    <property type="match status" value="1"/>
</dbReference>
<dbReference type="InterPro" id="IPR048528">
    <property type="entry name" value="Lamp2-like_luminal"/>
</dbReference>
<dbReference type="InterPro" id="IPR002000">
    <property type="entry name" value="Lysosome-assoc_membr_glycop"/>
</dbReference>
<dbReference type="PANTHER" id="PTHR11506">
    <property type="entry name" value="LYSOSOME-ASSOCIATED MEMBRANE GLYCOPROTEIN"/>
    <property type="match status" value="1"/>
</dbReference>
<dbReference type="PANTHER" id="PTHR11506:SF30">
    <property type="entry name" value="LYSOSOME-ASSOCIATED MEMBRANE GLYCOPROTEIN 3"/>
    <property type="match status" value="1"/>
</dbReference>
<dbReference type="Pfam" id="PF01299">
    <property type="entry name" value="Lamp2-like_luminal"/>
    <property type="match status" value="1"/>
</dbReference>
<dbReference type="PRINTS" id="PR00336">
    <property type="entry name" value="LYSASSOCTDMP"/>
</dbReference>
<dbReference type="PROSITE" id="PS51407">
    <property type="entry name" value="LAMP_3"/>
    <property type="match status" value="1"/>
</dbReference>
<accession>Q7TST5</accession>
<accession>Q8C1F6</accession>
<sequence>MPGQISAVAVLFLSLTVILHGYQIREKEFPKARGYLQYTATSAEQITTKPLLQLINQRSHITLASRFKDDYIQMAAETSAIENTAHITMKTVTPVTTKSLPPISSASYTFVRSNNAHMTASSTDDTIGSGSIAHLPVPTTRASLAIVNYITGRATQLGGQTTLPKTFFTASHKSTTNQRPTLSTNVLGTSTPTHKDRSTTSPVPLVPRPTLVTWSSPAKIGTYEVLNGSRLCIKAEMGLALIVQEKDLDSATQRYFNIDPSLTHASGKCDSQKSNLFLNFQGGSVNITFTKEENLYYISEVGAYLTISNTEKTYQGKKNTLMMFETVVGHSFKCVSEQSIQLSAQLQMKTMNIHLQAFDFEGDSFGNVNECLSDYTVVLPMVAIIVVVICVVGLSVYKIRQRHQSSAYQRI</sequence>
<name>LAMP3_MOUSE</name>
<reference key="1">
    <citation type="submission" date="2002-10" db="EMBL/GenBank/DDBJ databases">
        <title>Murine CD208/DC-LAMP is associated with the surfactant secretory organelles in type II pneumocytes.</title>
        <authorList>
            <person name="Salaun B.P.A."/>
            <person name="de Saint-Vis B.M."/>
            <person name="Clair-Moninot V.A."/>
            <person name="Pin J.J."/>
            <person name="Dubois-Barthelemy C."/>
            <person name="Kissenpfennig A."/>
            <person name="Peronne C."/>
            <person name="Mattei M.-G."/>
            <person name="Davoust J."/>
            <person name="Kleijmeer M.J."/>
            <person name="Lebecque S.J.E."/>
        </authorList>
    </citation>
    <scope>NUCLEOTIDE SEQUENCE [MRNA]</scope>
    <source>
        <strain>BALB/cJ</strain>
        <tissue>Lung</tissue>
    </source>
</reference>
<reference key="2">
    <citation type="journal article" date="2005" name="Science">
        <title>The transcriptional landscape of the mammalian genome.</title>
        <authorList>
            <person name="Carninci P."/>
            <person name="Kasukawa T."/>
            <person name="Katayama S."/>
            <person name="Gough J."/>
            <person name="Frith M.C."/>
            <person name="Maeda N."/>
            <person name="Oyama R."/>
            <person name="Ravasi T."/>
            <person name="Lenhard B."/>
            <person name="Wells C."/>
            <person name="Kodzius R."/>
            <person name="Shimokawa K."/>
            <person name="Bajic V.B."/>
            <person name="Brenner S.E."/>
            <person name="Batalov S."/>
            <person name="Forrest A.R."/>
            <person name="Zavolan M."/>
            <person name="Davis M.J."/>
            <person name="Wilming L.G."/>
            <person name="Aidinis V."/>
            <person name="Allen J.E."/>
            <person name="Ambesi-Impiombato A."/>
            <person name="Apweiler R."/>
            <person name="Aturaliya R.N."/>
            <person name="Bailey T.L."/>
            <person name="Bansal M."/>
            <person name="Baxter L."/>
            <person name="Beisel K.W."/>
            <person name="Bersano T."/>
            <person name="Bono H."/>
            <person name="Chalk A.M."/>
            <person name="Chiu K.P."/>
            <person name="Choudhary V."/>
            <person name="Christoffels A."/>
            <person name="Clutterbuck D.R."/>
            <person name="Crowe M.L."/>
            <person name="Dalla E."/>
            <person name="Dalrymple B.P."/>
            <person name="de Bono B."/>
            <person name="Della Gatta G."/>
            <person name="di Bernardo D."/>
            <person name="Down T."/>
            <person name="Engstrom P."/>
            <person name="Fagiolini M."/>
            <person name="Faulkner G."/>
            <person name="Fletcher C.F."/>
            <person name="Fukushima T."/>
            <person name="Furuno M."/>
            <person name="Futaki S."/>
            <person name="Gariboldi M."/>
            <person name="Georgii-Hemming P."/>
            <person name="Gingeras T.R."/>
            <person name="Gojobori T."/>
            <person name="Green R.E."/>
            <person name="Gustincich S."/>
            <person name="Harbers M."/>
            <person name="Hayashi Y."/>
            <person name="Hensch T.K."/>
            <person name="Hirokawa N."/>
            <person name="Hill D."/>
            <person name="Huminiecki L."/>
            <person name="Iacono M."/>
            <person name="Ikeo K."/>
            <person name="Iwama A."/>
            <person name="Ishikawa T."/>
            <person name="Jakt M."/>
            <person name="Kanapin A."/>
            <person name="Katoh M."/>
            <person name="Kawasawa Y."/>
            <person name="Kelso J."/>
            <person name="Kitamura H."/>
            <person name="Kitano H."/>
            <person name="Kollias G."/>
            <person name="Krishnan S.P."/>
            <person name="Kruger A."/>
            <person name="Kummerfeld S.K."/>
            <person name="Kurochkin I.V."/>
            <person name="Lareau L.F."/>
            <person name="Lazarevic D."/>
            <person name="Lipovich L."/>
            <person name="Liu J."/>
            <person name="Liuni S."/>
            <person name="McWilliam S."/>
            <person name="Madan Babu M."/>
            <person name="Madera M."/>
            <person name="Marchionni L."/>
            <person name="Matsuda H."/>
            <person name="Matsuzawa S."/>
            <person name="Miki H."/>
            <person name="Mignone F."/>
            <person name="Miyake S."/>
            <person name="Morris K."/>
            <person name="Mottagui-Tabar S."/>
            <person name="Mulder N."/>
            <person name="Nakano N."/>
            <person name="Nakauchi H."/>
            <person name="Ng P."/>
            <person name="Nilsson R."/>
            <person name="Nishiguchi S."/>
            <person name="Nishikawa S."/>
            <person name="Nori F."/>
            <person name="Ohara O."/>
            <person name="Okazaki Y."/>
            <person name="Orlando V."/>
            <person name="Pang K.C."/>
            <person name="Pavan W.J."/>
            <person name="Pavesi G."/>
            <person name="Pesole G."/>
            <person name="Petrovsky N."/>
            <person name="Piazza S."/>
            <person name="Reed J."/>
            <person name="Reid J.F."/>
            <person name="Ring B.Z."/>
            <person name="Ringwald M."/>
            <person name="Rost B."/>
            <person name="Ruan Y."/>
            <person name="Salzberg S.L."/>
            <person name="Sandelin A."/>
            <person name="Schneider C."/>
            <person name="Schoenbach C."/>
            <person name="Sekiguchi K."/>
            <person name="Semple C.A."/>
            <person name="Seno S."/>
            <person name="Sessa L."/>
            <person name="Sheng Y."/>
            <person name="Shibata Y."/>
            <person name="Shimada H."/>
            <person name="Shimada K."/>
            <person name="Silva D."/>
            <person name="Sinclair B."/>
            <person name="Sperling S."/>
            <person name="Stupka E."/>
            <person name="Sugiura K."/>
            <person name="Sultana R."/>
            <person name="Takenaka Y."/>
            <person name="Taki K."/>
            <person name="Tammoja K."/>
            <person name="Tan S.L."/>
            <person name="Tang S."/>
            <person name="Taylor M.S."/>
            <person name="Tegner J."/>
            <person name="Teichmann S.A."/>
            <person name="Ueda H.R."/>
            <person name="van Nimwegen E."/>
            <person name="Verardo R."/>
            <person name="Wei C.L."/>
            <person name="Yagi K."/>
            <person name="Yamanishi H."/>
            <person name="Zabarovsky E."/>
            <person name="Zhu S."/>
            <person name="Zimmer A."/>
            <person name="Hide W."/>
            <person name="Bult C."/>
            <person name="Grimmond S.M."/>
            <person name="Teasdale R.D."/>
            <person name="Liu E.T."/>
            <person name="Brusic V."/>
            <person name="Quackenbush J."/>
            <person name="Wahlestedt C."/>
            <person name="Mattick J.S."/>
            <person name="Hume D.A."/>
            <person name="Kai C."/>
            <person name="Sasaki D."/>
            <person name="Tomaru Y."/>
            <person name="Fukuda S."/>
            <person name="Kanamori-Katayama M."/>
            <person name="Suzuki M."/>
            <person name="Aoki J."/>
            <person name="Arakawa T."/>
            <person name="Iida J."/>
            <person name="Imamura K."/>
            <person name="Itoh M."/>
            <person name="Kato T."/>
            <person name="Kawaji H."/>
            <person name="Kawagashira N."/>
            <person name="Kawashima T."/>
            <person name="Kojima M."/>
            <person name="Kondo S."/>
            <person name="Konno H."/>
            <person name="Nakano K."/>
            <person name="Ninomiya N."/>
            <person name="Nishio T."/>
            <person name="Okada M."/>
            <person name="Plessy C."/>
            <person name="Shibata K."/>
            <person name="Shiraki T."/>
            <person name="Suzuki S."/>
            <person name="Tagami M."/>
            <person name="Waki K."/>
            <person name="Watahiki A."/>
            <person name="Okamura-Oho Y."/>
            <person name="Suzuki H."/>
            <person name="Kawai J."/>
            <person name="Hayashizaki Y."/>
        </authorList>
    </citation>
    <scope>NUCLEOTIDE SEQUENCE [LARGE SCALE MRNA]</scope>
    <source>
        <strain>C57BL/6J</strain>
        <tissue>Lung</tissue>
    </source>
</reference>
<evidence type="ECO:0000250" key="1"/>
<evidence type="ECO:0000250" key="2">
    <source>
        <dbReference type="UniProtKB" id="Q9UQV4"/>
    </source>
</evidence>
<evidence type="ECO:0000255" key="3"/>
<evidence type="ECO:0000255" key="4">
    <source>
        <dbReference type="PROSITE-ProRule" id="PRU00740"/>
    </source>
</evidence>
<evidence type="ECO:0000256" key="5">
    <source>
        <dbReference type="SAM" id="MobiDB-lite"/>
    </source>
</evidence>
<evidence type="ECO:0000305" key="6"/>
<organism>
    <name type="scientific">Mus musculus</name>
    <name type="common">Mouse</name>
    <dbReference type="NCBI Taxonomy" id="10090"/>
    <lineage>
        <taxon>Eukaryota</taxon>
        <taxon>Metazoa</taxon>
        <taxon>Chordata</taxon>
        <taxon>Craniata</taxon>
        <taxon>Vertebrata</taxon>
        <taxon>Euteleostomi</taxon>
        <taxon>Mammalia</taxon>
        <taxon>Eutheria</taxon>
        <taxon>Euarchontoglires</taxon>
        <taxon>Glires</taxon>
        <taxon>Rodentia</taxon>
        <taxon>Myomorpha</taxon>
        <taxon>Muroidea</taxon>
        <taxon>Muridae</taxon>
        <taxon>Murinae</taxon>
        <taxon>Mus</taxon>
        <taxon>Mus</taxon>
    </lineage>
</organism>
<gene>
    <name type="primary">Lamp3</name>
</gene>
<feature type="signal peptide" evidence="3">
    <location>
        <begin position="1"/>
        <end position="21"/>
    </location>
</feature>
<feature type="chain" id="PRO_0000223697" description="Lysosome-associated membrane glycoprotein 3">
    <location>
        <begin position="22"/>
        <end position="411"/>
    </location>
</feature>
<feature type="topological domain" description="Lumenal" evidence="3">
    <location>
        <begin position="22"/>
        <end position="376"/>
    </location>
</feature>
<feature type="transmembrane region" description="Helical" evidence="4">
    <location>
        <begin position="377"/>
        <end position="397"/>
    </location>
</feature>
<feature type="topological domain" description="Cytoplasmic" evidence="4">
    <location>
        <begin position="398"/>
        <end position="411"/>
    </location>
</feature>
<feature type="region of interest" description="Disordered" evidence="5">
    <location>
        <begin position="172"/>
        <end position="204"/>
    </location>
</feature>
<feature type="compositionally biased region" description="Polar residues" evidence="5">
    <location>
        <begin position="172"/>
        <end position="192"/>
    </location>
</feature>
<feature type="glycosylation site" description="N-linked (GlcNAc...) asparagine" evidence="3">
    <location>
        <position position="227"/>
    </location>
</feature>
<feature type="disulfide bond" evidence="4">
    <location>
        <begin position="232"/>
        <end position="269"/>
    </location>
</feature>
<feature type="disulfide bond" evidence="4">
    <location>
        <begin position="334"/>
        <end position="371"/>
    </location>
</feature>
<feature type="sequence conflict" description="In Ref. 2; BAC25713." evidence="6" ref="2">
    <original>A</original>
    <variation>G</variation>
    <location>
        <position position="75"/>
    </location>
</feature>
<feature type="sequence conflict" description="In Ref. 2; BAC25713." evidence="6" ref="2">
    <original>T</original>
    <variation>S</variation>
    <location>
        <position position="109"/>
    </location>
</feature>
<feature type="sequence conflict" description="In Ref. 2; BAC25713." evidence="6" ref="2">
    <original>KD</original>
    <variation>TG</variation>
    <location>
        <begin position="195"/>
        <end position="196"/>
    </location>
</feature>
<feature type="sequence conflict" description="In Ref. 2; BAC25713." evidence="6" ref="2">
    <original>L</original>
    <variation>W</variation>
    <location>
        <position position="248"/>
    </location>
</feature>
<feature type="sequence conflict" description="In Ref. 2; BAC25713." evidence="6" ref="2">
    <original>N</original>
    <variation>H</variation>
    <location>
        <position position="257"/>
    </location>
</feature>
<feature type="sequence conflict" description="In Ref. 2; BAC25713." evidence="6" ref="2">
    <original>K</original>
    <variation>N</variation>
    <location>
        <position position="268"/>
    </location>
</feature>
<feature type="sequence conflict" description="In Ref. 2; BAC25713." evidence="6" ref="2">
    <original>Q</original>
    <variation>H</variation>
    <location>
        <position position="272"/>
    </location>
</feature>
<proteinExistence type="evidence at transcript level"/>
<keyword id="KW-1064">Adaptive immunity</keyword>
<keyword id="KW-0968">Cytoplasmic vesicle</keyword>
<keyword id="KW-1015">Disulfide bond</keyword>
<keyword id="KW-0967">Endosome</keyword>
<keyword id="KW-0325">Glycoprotein</keyword>
<keyword id="KW-0391">Immunity</keyword>
<keyword id="KW-0458">Lysosome</keyword>
<keyword id="KW-0472">Membrane</keyword>
<keyword id="KW-1185">Reference proteome</keyword>
<keyword id="KW-0732">Signal</keyword>
<keyword id="KW-0812">Transmembrane</keyword>
<keyword id="KW-1133">Transmembrane helix</keyword>